<accession>Q0BL03</accession>
<protein>
    <recommendedName>
        <fullName evidence="1">Large ribosomal subunit protein bL27</fullName>
    </recommendedName>
    <alternativeName>
        <fullName evidence="3">50S ribosomal protein L27</fullName>
    </alternativeName>
</protein>
<feature type="chain" id="PRO_1000017485" description="Large ribosomal subunit protein bL27">
    <location>
        <begin position="1"/>
        <end position="84"/>
    </location>
</feature>
<feature type="region of interest" description="Disordered" evidence="2">
    <location>
        <begin position="1"/>
        <end position="21"/>
    </location>
</feature>
<reference key="1">
    <citation type="journal article" date="2006" name="J. Bacteriol.">
        <title>Chromosome rearrangement and diversification of Francisella tularensis revealed by the type B (OSU18) genome sequence.</title>
        <authorList>
            <person name="Petrosino J.F."/>
            <person name="Xiang Q."/>
            <person name="Karpathy S.E."/>
            <person name="Jiang H."/>
            <person name="Yerrapragada S."/>
            <person name="Liu Y."/>
            <person name="Gioia J."/>
            <person name="Hemphill L."/>
            <person name="Gonzalez A."/>
            <person name="Raghavan T.M."/>
            <person name="Uzman A."/>
            <person name="Fox G.E."/>
            <person name="Highlander S."/>
            <person name="Reichard M."/>
            <person name="Morton R.J."/>
            <person name="Clinkenbeard K.D."/>
            <person name="Weinstock G.M."/>
        </authorList>
    </citation>
    <scope>NUCLEOTIDE SEQUENCE [LARGE SCALE GENOMIC DNA]</scope>
    <source>
        <strain>OSU18</strain>
    </source>
</reference>
<name>RL27_FRATO</name>
<dbReference type="EMBL" id="CP000437">
    <property type="protein sequence ID" value="ABI83231.1"/>
    <property type="molecule type" value="Genomic_DNA"/>
</dbReference>
<dbReference type="RefSeq" id="WP_003016752.1">
    <property type="nucleotide sequence ID" value="NC_017463.1"/>
</dbReference>
<dbReference type="SMR" id="Q0BL03"/>
<dbReference type="KEGG" id="fth:FTH_1414"/>
<dbReference type="GO" id="GO:0022625">
    <property type="term" value="C:cytosolic large ribosomal subunit"/>
    <property type="evidence" value="ECO:0007669"/>
    <property type="project" value="TreeGrafter"/>
</dbReference>
<dbReference type="GO" id="GO:0003735">
    <property type="term" value="F:structural constituent of ribosome"/>
    <property type="evidence" value="ECO:0007669"/>
    <property type="project" value="InterPro"/>
</dbReference>
<dbReference type="GO" id="GO:0006412">
    <property type="term" value="P:translation"/>
    <property type="evidence" value="ECO:0007669"/>
    <property type="project" value="UniProtKB-UniRule"/>
</dbReference>
<dbReference type="FunFam" id="2.40.50.100:FF:000001">
    <property type="entry name" value="50S ribosomal protein L27"/>
    <property type="match status" value="1"/>
</dbReference>
<dbReference type="Gene3D" id="2.40.50.100">
    <property type="match status" value="1"/>
</dbReference>
<dbReference type="HAMAP" id="MF_00539">
    <property type="entry name" value="Ribosomal_bL27"/>
    <property type="match status" value="1"/>
</dbReference>
<dbReference type="InterPro" id="IPR001684">
    <property type="entry name" value="Ribosomal_bL27"/>
</dbReference>
<dbReference type="InterPro" id="IPR018261">
    <property type="entry name" value="Ribosomal_bL27_CS"/>
</dbReference>
<dbReference type="NCBIfam" id="TIGR00062">
    <property type="entry name" value="L27"/>
    <property type="match status" value="1"/>
</dbReference>
<dbReference type="PANTHER" id="PTHR15893:SF0">
    <property type="entry name" value="LARGE RIBOSOMAL SUBUNIT PROTEIN BL27M"/>
    <property type="match status" value="1"/>
</dbReference>
<dbReference type="PANTHER" id="PTHR15893">
    <property type="entry name" value="RIBOSOMAL PROTEIN L27"/>
    <property type="match status" value="1"/>
</dbReference>
<dbReference type="Pfam" id="PF01016">
    <property type="entry name" value="Ribosomal_L27"/>
    <property type="match status" value="1"/>
</dbReference>
<dbReference type="PRINTS" id="PR00063">
    <property type="entry name" value="RIBOSOMALL27"/>
</dbReference>
<dbReference type="SUPFAM" id="SSF110324">
    <property type="entry name" value="Ribosomal L27 protein-like"/>
    <property type="match status" value="1"/>
</dbReference>
<dbReference type="PROSITE" id="PS00831">
    <property type="entry name" value="RIBOSOMAL_L27"/>
    <property type="match status" value="1"/>
</dbReference>
<organism>
    <name type="scientific">Francisella tularensis subsp. holarctica (strain OSU18)</name>
    <dbReference type="NCBI Taxonomy" id="393011"/>
    <lineage>
        <taxon>Bacteria</taxon>
        <taxon>Pseudomonadati</taxon>
        <taxon>Pseudomonadota</taxon>
        <taxon>Gammaproteobacteria</taxon>
        <taxon>Thiotrichales</taxon>
        <taxon>Francisellaceae</taxon>
        <taxon>Francisella</taxon>
    </lineage>
</organism>
<sequence>MAHKKAGGSTRNGRDSNPKYLGVKRYGGELVKAGTIIIRQRGTKTHPGVNVGCGKDHTLFALKDGTVKFHTGGALNRKFVSIEE</sequence>
<proteinExistence type="inferred from homology"/>
<gene>
    <name evidence="1" type="primary">rpmA</name>
    <name type="ordered locus">FTH_1414</name>
</gene>
<evidence type="ECO:0000255" key="1">
    <source>
        <dbReference type="HAMAP-Rule" id="MF_00539"/>
    </source>
</evidence>
<evidence type="ECO:0000256" key="2">
    <source>
        <dbReference type="SAM" id="MobiDB-lite"/>
    </source>
</evidence>
<evidence type="ECO:0000305" key="3"/>
<comment type="similarity">
    <text evidence="1">Belongs to the bacterial ribosomal protein bL27 family.</text>
</comment>
<keyword id="KW-0687">Ribonucleoprotein</keyword>
<keyword id="KW-0689">Ribosomal protein</keyword>